<reference key="1">
    <citation type="journal article" date="2009" name="J. Bacteriol.">
        <title>The complete genome sequence of Helicobacter pylori strain G27.</title>
        <authorList>
            <person name="Baltrus D.A."/>
            <person name="Amieva M.R."/>
            <person name="Covacci A."/>
            <person name="Lowe T.M."/>
            <person name="Merrell D.S."/>
            <person name="Ottemann K.M."/>
            <person name="Stein M."/>
            <person name="Salama N.R."/>
            <person name="Guillemin K."/>
        </authorList>
    </citation>
    <scope>NUCLEOTIDE SEQUENCE [LARGE SCALE GENOMIC DNA]</scope>
    <source>
        <strain>G27</strain>
    </source>
</reference>
<keyword id="KW-0963">Cytoplasm</keyword>
<keyword id="KW-0489">Methyltransferase</keyword>
<keyword id="KW-1185">Reference proteome</keyword>
<keyword id="KW-0698">rRNA processing</keyword>
<keyword id="KW-0949">S-adenosyl-L-methionine</keyword>
<keyword id="KW-0808">Transferase</keyword>
<accession>B5Z772</accession>
<proteinExistence type="inferred from homology"/>
<name>RSMH_HELPG</name>
<feature type="chain" id="PRO_1000134762" description="Ribosomal RNA small subunit methyltransferase H">
    <location>
        <begin position="1"/>
        <end position="308"/>
    </location>
</feature>
<feature type="binding site" evidence="1">
    <location>
        <begin position="36"/>
        <end position="38"/>
    </location>
    <ligand>
        <name>S-adenosyl-L-methionine</name>
        <dbReference type="ChEBI" id="CHEBI:59789"/>
    </ligand>
</feature>
<feature type="binding site" evidence="1">
    <location>
        <position position="55"/>
    </location>
    <ligand>
        <name>S-adenosyl-L-methionine</name>
        <dbReference type="ChEBI" id="CHEBI:59789"/>
    </ligand>
</feature>
<feature type="binding site" evidence="1">
    <location>
        <position position="86"/>
    </location>
    <ligand>
        <name>S-adenosyl-L-methionine</name>
        <dbReference type="ChEBI" id="CHEBI:59789"/>
    </ligand>
</feature>
<feature type="binding site" evidence="1">
    <location>
        <position position="103"/>
    </location>
    <ligand>
        <name>S-adenosyl-L-methionine</name>
        <dbReference type="ChEBI" id="CHEBI:59789"/>
    </ligand>
</feature>
<feature type="binding site" evidence="1">
    <location>
        <position position="110"/>
    </location>
    <ligand>
        <name>S-adenosyl-L-methionine</name>
        <dbReference type="ChEBI" id="CHEBI:59789"/>
    </ligand>
</feature>
<evidence type="ECO:0000255" key="1">
    <source>
        <dbReference type="HAMAP-Rule" id="MF_01007"/>
    </source>
</evidence>
<protein>
    <recommendedName>
        <fullName evidence="1">Ribosomal RNA small subunit methyltransferase H</fullName>
        <ecNumber evidence="1">2.1.1.199</ecNumber>
    </recommendedName>
    <alternativeName>
        <fullName evidence="1">16S rRNA m(4)C1402 methyltransferase</fullName>
    </alternativeName>
    <alternativeName>
        <fullName evidence="1">rRNA (cytosine-N(4)-)-methyltransferase RsmH</fullName>
    </alternativeName>
</protein>
<sequence length="308" mass="34841">MQEIENLHQSVLLQEVLQAFTPLEEGVLVDCTLGLGGHSKALLSQKPHLKLIGIDKDKFAQEIAKERLKAFEGRYNLLSGGFAKRFKEALEIHGDRIKGVLVDLGVSSLQLDDDNRGFNFHSHALDMRMDLESDLNAQKVINSYPVIALEKIFRDYGEIKEYKKIAHKIAERRAKKPFKDAKDLSDFLSSFSKNKKIHPATLVFQAVRIEVNSELEELKEFLQCARNLNGAILCVISFHSLEDGLVKNAFKDYAKNCICDPLSFQCTCSNNHALGAILTKKPITPSPEEIKNNRRSRSAKMRVFQFKP</sequence>
<gene>
    <name evidence="1" type="primary">rsmH</name>
    <name type="synonym">mraW</name>
    <name type="ordered locus">HPG27_664</name>
</gene>
<comment type="function">
    <text evidence="1">Specifically methylates the N4 position of cytidine in position 1402 (C1402) of 16S rRNA.</text>
</comment>
<comment type="catalytic activity">
    <reaction evidence="1">
        <text>cytidine(1402) in 16S rRNA + S-adenosyl-L-methionine = N(4)-methylcytidine(1402) in 16S rRNA + S-adenosyl-L-homocysteine + H(+)</text>
        <dbReference type="Rhea" id="RHEA:42928"/>
        <dbReference type="Rhea" id="RHEA-COMP:10286"/>
        <dbReference type="Rhea" id="RHEA-COMP:10287"/>
        <dbReference type="ChEBI" id="CHEBI:15378"/>
        <dbReference type="ChEBI" id="CHEBI:57856"/>
        <dbReference type="ChEBI" id="CHEBI:59789"/>
        <dbReference type="ChEBI" id="CHEBI:74506"/>
        <dbReference type="ChEBI" id="CHEBI:82748"/>
        <dbReference type="EC" id="2.1.1.199"/>
    </reaction>
</comment>
<comment type="subcellular location">
    <subcellularLocation>
        <location evidence="1">Cytoplasm</location>
    </subcellularLocation>
</comment>
<comment type="similarity">
    <text evidence="1">Belongs to the methyltransferase superfamily. RsmH family.</text>
</comment>
<organism>
    <name type="scientific">Helicobacter pylori (strain G27)</name>
    <dbReference type="NCBI Taxonomy" id="563041"/>
    <lineage>
        <taxon>Bacteria</taxon>
        <taxon>Pseudomonadati</taxon>
        <taxon>Campylobacterota</taxon>
        <taxon>Epsilonproteobacteria</taxon>
        <taxon>Campylobacterales</taxon>
        <taxon>Helicobacteraceae</taxon>
        <taxon>Helicobacter</taxon>
    </lineage>
</organism>
<dbReference type="EC" id="2.1.1.199" evidence="1"/>
<dbReference type="EMBL" id="CP001173">
    <property type="protein sequence ID" value="ACI27421.1"/>
    <property type="molecule type" value="Genomic_DNA"/>
</dbReference>
<dbReference type="RefSeq" id="WP_001155551.1">
    <property type="nucleotide sequence ID" value="NC_011333.1"/>
</dbReference>
<dbReference type="SMR" id="B5Z772"/>
<dbReference type="KEGG" id="hpg:HPG27_664"/>
<dbReference type="HOGENOM" id="CLU_038422_3_0_7"/>
<dbReference type="Proteomes" id="UP000001735">
    <property type="component" value="Chromosome"/>
</dbReference>
<dbReference type="GO" id="GO:0005737">
    <property type="term" value="C:cytoplasm"/>
    <property type="evidence" value="ECO:0007669"/>
    <property type="project" value="UniProtKB-SubCell"/>
</dbReference>
<dbReference type="GO" id="GO:0071424">
    <property type="term" value="F:rRNA (cytosine-N4-)-methyltransferase activity"/>
    <property type="evidence" value="ECO:0007669"/>
    <property type="project" value="UniProtKB-UniRule"/>
</dbReference>
<dbReference type="GO" id="GO:0070475">
    <property type="term" value="P:rRNA base methylation"/>
    <property type="evidence" value="ECO:0007669"/>
    <property type="project" value="UniProtKB-UniRule"/>
</dbReference>
<dbReference type="FunFam" id="1.10.150.170:FF:000008">
    <property type="entry name" value="Ribosomal RNA small subunit methyltransferase H"/>
    <property type="match status" value="1"/>
</dbReference>
<dbReference type="Gene3D" id="1.10.150.170">
    <property type="entry name" value="Putative methyltransferase TM0872, insert domain"/>
    <property type="match status" value="1"/>
</dbReference>
<dbReference type="Gene3D" id="3.40.50.150">
    <property type="entry name" value="Vaccinia Virus protein VP39"/>
    <property type="match status" value="1"/>
</dbReference>
<dbReference type="HAMAP" id="MF_01007">
    <property type="entry name" value="16SrRNA_methyltr_H"/>
    <property type="match status" value="1"/>
</dbReference>
<dbReference type="InterPro" id="IPR002903">
    <property type="entry name" value="RsmH"/>
</dbReference>
<dbReference type="InterPro" id="IPR023397">
    <property type="entry name" value="SAM-dep_MeTrfase_MraW_recog"/>
</dbReference>
<dbReference type="InterPro" id="IPR029063">
    <property type="entry name" value="SAM-dependent_MTases_sf"/>
</dbReference>
<dbReference type="NCBIfam" id="TIGR00006">
    <property type="entry name" value="16S rRNA (cytosine(1402)-N(4))-methyltransferase RsmH"/>
    <property type="match status" value="1"/>
</dbReference>
<dbReference type="PANTHER" id="PTHR11265:SF0">
    <property type="entry name" value="12S RRNA N4-METHYLCYTIDINE METHYLTRANSFERASE"/>
    <property type="match status" value="1"/>
</dbReference>
<dbReference type="PANTHER" id="PTHR11265">
    <property type="entry name" value="S-ADENOSYL-METHYLTRANSFERASE MRAW"/>
    <property type="match status" value="1"/>
</dbReference>
<dbReference type="Pfam" id="PF01795">
    <property type="entry name" value="Methyltransf_5"/>
    <property type="match status" value="1"/>
</dbReference>
<dbReference type="PIRSF" id="PIRSF004486">
    <property type="entry name" value="MraW"/>
    <property type="match status" value="1"/>
</dbReference>
<dbReference type="SUPFAM" id="SSF81799">
    <property type="entry name" value="Putative methyltransferase TM0872, insert domain"/>
    <property type="match status" value="1"/>
</dbReference>
<dbReference type="SUPFAM" id="SSF53335">
    <property type="entry name" value="S-adenosyl-L-methionine-dependent methyltransferases"/>
    <property type="match status" value="1"/>
</dbReference>